<reference key="1">
    <citation type="journal article" date="2002" name="Nucleic Acids Res.">
        <title>Genome sequence of Shigella flexneri 2a: insights into pathogenicity through comparison with genomes of Escherichia coli K12 and O157.</title>
        <authorList>
            <person name="Jin Q."/>
            <person name="Yuan Z."/>
            <person name="Xu J."/>
            <person name="Wang Y."/>
            <person name="Shen Y."/>
            <person name="Lu W."/>
            <person name="Wang J."/>
            <person name="Liu H."/>
            <person name="Yang J."/>
            <person name="Yang F."/>
            <person name="Zhang X."/>
            <person name="Zhang J."/>
            <person name="Yang G."/>
            <person name="Wu H."/>
            <person name="Qu D."/>
            <person name="Dong J."/>
            <person name="Sun L."/>
            <person name="Xue Y."/>
            <person name="Zhao A."/>
            <person name="Gao Y."/>
            <person name="Zhu J."/>
            <person name="Kan B."/>
            <person name="Ding K."/>
            <person name="Chen S."/>
            <person name="Cheng H."/>
            <person name="Yao Z."/>
            <person name="He B."/>
            <person name="Chen R."/>
            <person name="Ma D."/>
            <person name="Qiang B."/>
            <person name="Wen Y."/>
            <person name="Hou Y."/>
            <person name="Yu J."/>
        </authorList>
    </citation>
    <scope>NUCLEOTIDE SEQUENCE [LARGE SCALE GENOMIC DNA]</scope>
    <source>
        <strain>301 / Serotype 2a</strain>
    </source>
</reference>
<reference key="2">
    <citation type="journal article" date="2003" name="Infect. Immun.">
        <title>Complete genome sequence and comparative genomics of Shigella flexneri serotype 2a strain 2457T.</title>
        <authorList>
            <person name="Wei J."/>
            <person name="Goldberg M.B."/>
            <person name="Burland V."/>
            <person name="Venkatesan M.M."/>
            <person name="Deng W."/>
            <person name="Fournier G."/>
            <person name="Mayhew G.F."/>
            <person name="Plunkett G. III"/>
            <person name="Rose D.J."/>
            <person name="Darling A."/>
            <person name="Mau B."/>
            <person name="Perna N.T."/>
            <person name="Payne S.M."/>
            <person name="Runyen-Janecky L.J."/>
            <person name="Zhou S."/>
            <person name="Schwartz D.C."/>
            <person name="Blattner F.R."/>
        </authorList>
    </citation>
    <scope>NUCLEOTIDE SEQUENCE [LARGE SCALE GENOMIC DNA]</scope>
    <source>
        <strain>ATCC 700930 / 2457T / Serotype 2a</strain>
    </source>
</reference>
<name>YRFG_SHIFL</name>
<comment type="function">
    <text evidence="1">Catalyzes the dephosphorylation of different purine nucleotides (GMP and IMP).</text>
</comment>
<comment type="catalytic activity">
    <reaction>
        <text>a ribonucleoside 5'-phosphate + H2O = a ribonucleoside + phosphate</text>
        <dbReference type="Rhea" id="RHEA:12484"/>
        <dbReference type="ChEBI" id="CHEBI:15377"/>
        <dbReference type="ChEBI" id="CHEBI:18254"/>
        <dbReference type="ChEBI" id="CHEBI:43474"/>
        <dbReference type="ChEBI" id="CHEBI:58043"/>
        <dbReference type="EC" id="3.1.3.5"/>
    </reaction>
</comment>
<comment type="cofactor">
    <cofactor evidence="1">
        <name>Mg(2+)</name>
        <dbReference type="ChEBI" id="CHEBI:18420"/>
    </cofactor>
    <cofactor evidence="1">
        <name>Mn(2+)</name>
        <dbReference type="ChEBI" id="CHEBI:29035"/>
    </cofactor>
    <cofactor evidence="1">
        <name>Co(2+)</name>
        <dbReference type="ChEBI" id="CHEBI:48828"/>
    </cofactor>
    <cofactor evidence="1">
        <name>Zn(2+)</name>
        <dbReference type="ChEBI" id="CHEBI:29105"/>
    </cofactor>
    <text evidence="1">Magnesium. Can also use other divalent metal cations as manganese, cobalt or zinc.</text>
</comment>
<comment type="similarity">
    <text evidence="2">Belongs to the HAD-like hydrolase superfamily.</text>
</comment>
<comment type="sequence caution" evidence="2">
    <conflict type="erroneous initiation">
        <sequence resource="EMBL-CDS" id="AAN44878"/>
    </conflict>
    <text>Extended N-terminus.</text>
</comment>
<comment type="sequence caution" evidence="2">
    <conflict type="erroneous initiation">
        <sequence resource="EMBL-CDS" id="AAP19300"/>
    </conflict>
    <text>Extended N-terminus.</text>
</comment>
<organism>
    <name type="scientific">Shigella flexneri</name>
    <dbReference type="NCBI Taxonomy" id="623"/>
    <lineage>
        <taxon>Bacteria</taxon>
        <taxon>Pseudomonadati</taxon>
        <taxon>Pseudomonadota</taxon>
        <taxon>Gammaproteobacteria</taxon>
        <taxon>Enterobacterales</taxon>
        <taxon>Enterobacteriaceae</taxon>
        <taxon>Shigella</taxon>
    </lineage>
</organism>
<proteinExistence type="inferred from homology"/>
<accession>P64637</accession>
<accession>P45801</accession>
<evidence type="ECO:0000250" key="1"/>
<evidence type="ECO:0000305" key="2"/>
<feature type="chain" id="PRO_0000169543" description="GMP/IMP nucleotidase YrfG">
    <location>
        <begin position="1"/>
        <end position="222"/>
    </location>
</feature>
<feature type="active site" description="Nucleophile" evidence="1">
    <location>
        <position position="9"/>
    </location>
</feature>
<feature type="binding site" evidence="1">
    <location>
        <begin position="9"/>
        <end position="11"/>
    </location>
    <ligand>
        <name>substrate</name>
    </ligand>
</feature>
<feature type="binding site" evidence="1">
    <location>
        <position position="9"/>
    </location>
    <ligand>
        <name>Mg(2+)</name>
        <dbReference type="ChEBI" id="CHEBI:18420"/>
    </ligand>
</feature>
<feature type="binding site" evidence="1">
    <location>
        <position position="11"/>
    </location>
    <ligand>
        <name>Mg(2+)</name>
        <dbReference type="ChEBI" id="CHEBI:18420"/>
    </ligand>
</feature>
<feature type="binding site" evidence="1">
    <location>
        <position position="149"/>
    </location>
    <ligand>
        <name>substrate</name>
    </ligand>
</feature>
<feature type="binding site" evidence="1">
    <location>
        <position position="174"/>
    </location>
    <ligand>
        <name>Mg(2+)</name>
        <dbReference type="ChEBI" id="CHEBI:18420"/>
    </ligand>
</feature>
<sequence length="222" mass="25399">MHINIAWQDVDTVLLDMDGTLLDLAFDNYFWQKLVPETWGAKNGVTPQEAMEYMRQQYHDVQHTLNWYCLDYWSEQLGLDICAMTTEMGPRAVLREDTIPFLEALKASGKQRILLTNAHPHNLAVKLEHTGLDAHLDLLLSTHTFGYPKEDQRLWHAVAEATGLKAERTLFIDDSEAILDAAAQFGIRYCLGVTNPDSGIAEKQYQRHPSLNDYRRLIPSLM</sequence>
<keyword id="KW-0378">Hydrolase</keyword>
<keyword id="KW-0460">Magnesium</keyword>
<keyword id="KW-0464">Manganese</keyword>
<keyword id="KW-0479">Metal-binding</keyword>
<keyword id="KW-1185">Reference proteome</keyword>
<protein>
    <recommendedName>
        <fullName>GMP/IMP nucleotidase YrfG</fullName>
        <ecNumber>3.1.3.5</ecNumber>
    </recommendedName>
</protein>
<dbReference type="EC" id="3.1.3.5"/>
<dbReference type="EMBL" id="AE005674">
    <property type="protein sequence ID" value="AAN44878.1"/>
    <property type="status" value="ALT_INIT"/>
    <property type="molecule type" value="Genomic_DNA"/>
</dbReference>
<dbReference type="EMBL" id="AE014073">
    <property type="protein sequence ID" value="AAP19300.1"/>
    <property type="status" value="ALT_INIT"/>
    <property type="molecule type" value="Genomic_DNA"/>
</dbReference>
<dbReference type="RefSeq" id="NP_709171.1">
    <property type="nucleotide sequence ID" value="NC_004337.2"/>
</dbReference>
<dbReference type="RefSeq" id="WP_001295168.1">
    <property type="nucleotide sequence ID" value="NZ_WPGW01000003.1"/>
</dbReference>
<dbReference type="SMR" id="P64637"/>
<dbReference type="STRING" id="198214.SF3417"/>
<dbReference type="PaxDb" id="198214-SF3417"/>
<dbReference type="GeneID" id="1026872"/>
<dbReference type="GeneID" id="93778599"/>
<dbReference type="KEGG" id="sfl:SF3417"/>
<dbReference type="KEGG" id="sfx:S4345"/>
<dbReference type="PATRIC" id="fig|198214.7.peg.4033"/>
<dbReference type="HOGENOM" id="CLU_106706_0_0_6"/>
<dbReference type="Proteomes" id="UP000001006">
    <property type="component" value="Chromosome"/>
</dbReference>
<dbReference type="Proteomes" id="UP000002673">
    <property type="component" value="Chromosome"/>
</dbReference>
<dbReference type="GO" id="GO:0005829">
    <property type="term" value="C:cytosol"/>
    <property type="evidence" value="ECO:0007669"/>
    <property type="project" value="TreeGrafter"/>
</dbReference>
<dbReference type="GO" id="GO:0008253">
    <property type="term" value="F:5'-nucleotidase activity"/>
    <property type="evidence" value="ECO:0007669"/>
    <property type="project" value="UniProtKB-EC"/>
</dbReference>
<dbReference type="GO" id="GO:0046872">
    <property type="term" value="F:metal ion binding"/>
    <property type="evidence" value="ECO:0007669"/>
    <property type="project" value="UniProtKB-KW"/>
</dbReference>
<dbReference type="GO" id="GO:0008967">
    <property type="term" value="F:phosphoglycolate phosphatase activity"/>
    <property type="evidence" value="ECO:0007669"/>
    <property type="project" value="TreeGrafter"/>
</dbReference>
<dbReference type="GO" id="GO:0006281">
    <property type="term" value="P:DNA repair"/>
    <property type="evidence" value="ECO:0007669"/>
    <property type="project" value="TreeGrafter"/>
</dbReference>
<dbReference type="Gene3D" id="3.40.50.1000">
    <property type="entry name" value="HAD superfamily/HAD-like"/>
    <property type="match status" value="1"/>
</dbReference>
<dbReference type="InterPro" id="IPR050155">
    <property type="entry name" value="HAD-like_hydrolase_sf"/>
</dbReference>
<dbReference type="InterPro" id="IPR036412">
    <property type="entry name" value="HAD-like_sf"/>
</dbReference>
<dbReference type="InterPro" id="IPR006439">
    <property type="entry name" value="HAD-SF_hydro_IA"/>
</dbReference>
<dbReference type="InterPro" id="IPR023214">
    <property type="entry name" value="HAD_sf"/>
</dbReference>
<dbReference type="NCBIfam" id="TIGR01509">
    <property type="entry name" value="HAD-SF-IA-v3"/>
    <property type="match status" value="1"/>
</dbReference>
<dbReference type="NCBIfam" id="NF011564">
    <property type="entry name" value="PRK14988.1"/>
    <property type="match status" value="1"/>
</dbReference>
<dbReference type="PANTHER" id="PTHR43434:SF3">
    <property type="entry name" value="GMP_IMP NUCLEOTIDASE YRFG"/>
    <property type="match status" value="1"/>
</dbReference>
<dbReference type="PANTHER" id="PTHR43434">
    <property type="entry name" value="PHOSPHOGLYCOLATE PHOSPHATASE"/>
    <property type="match status" value="1"/>
</dbReference>
<dbReference type="Pfam" id="PF00702">
    <property type="entry name" value="Hydrolase"/>
    <property type="match status" value="1"/>
</dbReference>
<dbReference type="PRINTS" id="PR00413">
    <property type="entry name" value="HADHALOGNASE"/>
</dbReference>
<dbReference type="SFLD" id="SFLDG01129">
    <property type="entry name" value="C1.5:_HAD__Beta-PGM__Phosphata"/>
    <property type="match status" value="1"/>
</dbReference>
<dbReference type="SFLD" id="SFLDS00003">
    <property type="entry name" value="Haloacid_Dehalogenase"/>
    <property type="match status" value="1"/>
</dbReference>
<dbReference type="SUPFAM" id="SSF56784">
    <property type="entry name" value="HAD-like"/>
    <property type="match status" value="1"/>
</dbReference>
<gene>
    <name type="primary">yrfG</name>
    <name type="ordered locus">SF3417</name>
    <name type="ordered locus">S4345</name>
</gene>